<protein>
    <recommendedName>
        <fullName>Popeye domain-containing protein 2</fullName>
        <shortName>Popeye protein 2</shortName>
    </recommendedName>
</protein>
<name>POPD2_HUMAN</name>
<feature type="chain" id="PRO_0000046793" description="Popeye domain-containing protein 2">
    <location>
        <begin position="1"/>
        <end position="364"/>
    </location>
</feature>
<feature type="transmembrane region" description="Helical" evidence="3">
    <location>
        <begin position="37"/>
        <end position="57"/>
    </location>
</feature>
<feature type="transmembrane region" description="Helical" evidence="3">
    <location>
        <begin position="77"/>
        <end position="97"/>
    </location>
</feature>
<feature type="region of interest" description="Disordered" evidence="4">
    <location>
        <begin position="276"/>
        <end position="333"/>
    </location>
</feature>
<feature type="compositionally biased region" description="Polar residues" evidence="4">
    <location>
        <begin position="300"/>
        <end position="309"/>
    </location>
</feature>
<feature type="modified residue" description="Phosphothreonine" evidence="2">
    <location>
        <position position="361"/>
    </location>
</feature>
<feature type="glycosylation site" description="N-linked (GlcNAc...) asparagine" evidence="3">
    <location>
        <position position="4"/>
    </location>
</feature>
<feature type="splice variant" id="VSP_008743" description="In isoform 2." evidence="7">
    <original>ASRIPLQSYSQVISRGQAPLAPTHTPEL</original>
    <variation>EIDDFPSYFHQFGFSGKVAAGRIP</variation>
    <location>
        <begin position="337"/>
        <end position="364"/>
    </location>
</feature>
<feature type="sequence variant" id="VAR_053601" description="In dbSNP:rs4688023.">
    <original>V</original>
    <variation>I</variation>
    <location>
        <position position="29"/>
    </location>
</feature>
<feature type="sequence conflict" description="In Ref. 1; AAG23406." evidence="8" ref="1">
    <original>S</original>
    <variation>F</variation>
    <location>
        <position position="311"/>
    </location>
</feature>
<feature type="sequence conflict" description="In Ref. 1; AAG23406." evidence="8" ref="1">
    <original>ATTNFPAPPTRARL</original>
    <variation>RFPPTFPALSYRGQVC</variation>
    <location>
        <begin position="315"/>
        <end position="328"/>
    </location>
</feature>
<feature type="sequence conflict" description="In Ref. 1; AAG23406." evidence="8" ref="1">
    <original>PDS</original>
    <variation>ASN</variation>
    <location>
        <begin position="331"/>
        <end position="333"/>
    </location>
</feature>
<feature type="sequence conflict" description="In Ref. 1; AAG23406." evidence="8" ref="1">
    <original>R</original>
    <variation>K</variation>
    <location>
        <position position="339"/>
    </location>
</feature>
<comment type="function">
    <text evidence="1 2">Important for the maintenance of cardiac function. Plays a regulatory function in heart rate dynamics mediated, at least in part, through cAMP-binding and, probably, by increasing cell surface expression of the potassium channel KCNK2 and enhancing current density.</text>
</comment>
<comment type="subcellular location">
    <subcellularLocation>
        <location evidence="6">Membrane</location>
        <topology evidence="8">Multi-pass membrane protein</topology>
    </subcellularLocation>
    <subcellularLocation>
        <location evidence="6">Cell membrane</location>
        <location evidence="6">Sarcolemma</location>
    </subcellularLocation>
</comment>
<comment type="alternative products">
    <event type="alternative splicing"/>
    <isoform>
        <id>Q9HBU9-1</id>
        <name>1</name>
        <sequence type="displayed"/>
    </isoform>
    <isoform>
        <id>Q9HBU9-2</id>
        <name>2</name>
        <sequence type="described" ref="VSP_008743"/>
    </isoform>
</comment>
<comment type="tissue specificity">
    <text evidence="5 6">Expressed predominantly in the heart and in the skeletal muscle.</text>
</comment>
<comment type="similarity">
    <text evidence="8">Belongs to the popeye family.</text>
</comment>
<comment type="sequence caution" evidence="8">
    <conflict type="erroneous initiation">
        <sequence resource="EMBL-CDS" id="AAH26911"/>
    </conflict>
    <text>Truncated N-terminus.</text>
</comment>
<evidence type="ECO:0000250" key="1">
    <source>
        <dbReference type="UniProtKB" id="Q6JWV8"/>
    </source>
</evidence>
<evidence type="ECO:0000250" key="2">
    <source>
        <dbReference type="UniProtKB" id="Q9ES82"/>
    </source>
</evidence>
<evidence type="ECO:0000255" key="3"/>
<evidence type="ECO:0000256" key="4">
    <source>
        <dbReference type="SAM" id="MobiDB-lite"/>
    </source>
</evidence>
<evidence type="ECO:0000269" key="5">
    <source>
    </source>
</evidence>
<evidence type="ECO:0000269" key="6">
    <source>
    </source>
</evidence>
<evidence type="ECO:0000303" key="7">
    <source>
    </source>
</evidence>
<evidence type="ECO:0000305" key="8"/>
<proteinExistence type="evidence at protein level"/>
<organism>
    <name type="scientific">Homo sapiens</name>
    <name type="common">Human</name>
    <dbReference type="NCBI Taxonomy" id="9606"/>
    <lineage>
        <taxon>Eukaryota</taxon>
        <taxon>Metazoa</taxon>
        <taxon>Chordata</taxon>
        <taxon>Craniata</taxon>
        <taxon>Vertebrata</taxon>
        <taxon>Euteleostomi</taxon>
        <taxon>Mammalia</taxon>
        <taxon>Eutheria</taxon>
        <taxon>Euarchontoglires</taxon>
        <taxon>Primates</taxon>
        <taxon>Haplorrhini</taxon>
        <taxon>Catarrhini</taxon>
        <taxon>Hominidae</taxon>
        <taxon>Homo</taxon>
    </lineage>
</organism>
<dbReference type="EMBL" id="AF204173">
    <property type="protein sequence ID" value="AAG23406.1"/>
    <property type="molecule type" value="mRNA"/>
</dbReference>
<dbReference type="EMBL" id="BC026911">
    <property type="protein sequence ID" value="AAH26911.1"/>
    <property type="status" value="ALT_INIT"/>
    <property type="molecule type" value="mRNA"/>
</dbReference>
<dbReference type="EMBL" id="BC044929">
    <property type="protein sequence ID" value="AAH44929.1"/>
    <property type="molecule type" value="mRNA"/>
</dbReference>
<dbReference type="CCDS" id="CCDS2992.1">
    <molecule id="Q9HBU9-1"/>
</dbReference>
<dbReference type="CCDS" id="CCDS77797.1">
    <molecule id="Q9HBU9-2"/>
</dbReference>
<dbReference type="RefSeq" id="NP_001295262.1">
    <molecule id="Q9HBU9-2"/>
    <property type="nucleotide sequence ID" value="NM_001308333.2"/>
</dbReference>
<dbReference type="RefSeq" id="NP_071418.2">
    <molecule id="Q9HBU9-1"/>
    <property type="nucleotide sequence ID" value="NM_022135.3"/>
</dbReference>
<dbReference type="SMR" id="Q9HBU9"/>
<dbReference type="BioGRID" id="122053">
    <property type="interactions" value="34"/>
</dbReference>
<dbReference type="FunCoup" id="Q9HBU9">
    <property type="interactions" value="424"/>
</dbReference>
<dbReference type="IntAct" id="Q9HBU9">
    <property type="interactions" value="9"/>
</dbReference>
<dbReference type="MINT" id="Q9HBU9"/>
<dbReference type="STRING" id="9606.ENSP00000264231"/>
<dbReference type="GlyCosmos" id="Q9HBU9">
    <property type="glycosylation" value="1 site, No reported glycans"/>
</dbReference>
<dbReference type="GlyGen" id="Q9HBU9">
    <property type="glycosylation" value="5 sites, 1 O-linked glycan (1 site)"/>
</dbReference>
<dbReference type="iPTMnet" id="Q9HBU9"/>
<dbReference type="PhosphoSitePlus" id="Q9HBU9"/>
<dbReference type="BioMuta" id="POPDC2"/>
<dbReference type="DMDM" id="38258244"/>
<dbReference type="MassIVE" id="Q9HBU9"/>
<dbReference type="PaxDb" id="9606-ENSP00000264231"/>
<dbReference type="PeptideAtlas" id="Q9HBU9"/>
<dbReference type="ProteomicsDB" id="81596">
    <molecule id="Q9HBU9-1"/>
</dbReference>
<dbReference type="ProteomicsDB" id="81597">
    <molecule id="Q9HBU9-2"/>
</dbReference>
<dbReference type="Antibodypedia" id="16586">
    <property type="antibodies" value="60 antibodies from 14 providers"/>
</dbReference>
<dbReference type="DNASU" id="64091"/>
<dbReference type="Ensembl" id="ENST00000264231.7">
    <molecule id="Q9HBU9-1"/>
    <property type="protein sequence ID" value="ENSP00000264231.3"/>
    <property type="gene ID" value="ENSG00000121577.14"/>
</dbReference>
<dbReference type="Ensembl" id="ENST00000468801.1">
    <molecule id="Q9HBU9-2"/>
    <property type="protein sequence ID" value="ENSP00000420715.1"/>
    <property type="gene ID" value="ENSG00000121577.14"/>
</dbReference>
<dbReference type="GeneID" id="64091"/>
<dbReference type="KEGG" id="hsa:64091"/>
<dbReference type="UCSC" id="uc003ecx.2">
    <molecule id="Q9HBU9-1"/>
    <property type="organism name" value="human"/>
</dbReference>
<dbReference type="AGR" id="HGNC:17648"/>
<dbReference type="CTD" id="64091"/>
<dbReference type="DisGeNET" id="64091"/>
<dbReference type="GeneCards" id="POPDC2"/>
<dbReference type="HGNC" id="HGNC:17648">
    <property type="gene designation" value="POPDC2"/>
</dbReference>
<dbReference type="HPA" id="ENSG00000121577">
    <property type="expression patterns" value="Tissue enriched (heart)"/>
</dbReference>
<dbReference type="MIM" id="605823">
    <property type="type" value="gene"/>
</dbReference>
<dbReference type="neXtProt" id="NX_Q9HBU9"/>
<dbReference type="OpenTargets" id="ENSG00000121577"/>
<dbReference type="PharmGKB" id="PA134982197"/>
<dbReference type="VEuPathDB" id="HostDB:ENSG00000121577"/>
<dbReference type="eggNOG" id="ENOG502R0XG">
    <property type="taxonomic scope" value="Eukaryota"/>
</dbReference>
<dbReference type="GeneTree" id="ENSGT00390000002563"/>
<dbReference type="HOGENOM" id="CLU_048494_2_0_1"/>
<dbReference type="InParanoid" id="Q9HBU9"/>
<dbReference type="OrthoDB" id="425611at2759"/>
<dbReference type="PAN-GO" id="Q9HBU9">
    <property type="GO annotations" value="6 GO annotations based on evolutionary models"/>
</dbReference>
<dbReference type="PhylomeDB" id="Q9HBU9"/>
<dbReference type="TreeFam" id="TF326644"/>
<dbReference type="PathwayCommons" id="Q9HBU9"/>
<dbReference type="SignaLink" id="Q9HBU9"/>
<dbReference type="BioGRID-ORCS" id="64091">
    <property type="hits" value="4 hits in 1145 CRISPR screens"/>
</dbReference>
<dbReference type="ChiTaRS" id="POPDC2">
    <property type="organism name" value="human"/>
</dbReference>
<dbReference type="GeneWiki" id="POPDC2"/>
<dbReference type="GenomeRNAi" id="64091"/>
<dbReference type="Pharos" id="Q9HBU9">
    <property type="development level" value="Tbio"/>
</dbReference>
<dbReference type="PRO" id="PR:Q9HBU9"/>
<dbReference type="Proteomes" id="UP000005640">
    <property type="component" value="Chromosome 3"/>
</dbReference>
<dbReference type="RNAct" id="Q9HBU9">
    <property type="molecule type" value="protein"/>
</dbReference>
<dbReference type="Bgee" id="ENSG00000121577">
    <property type="expression patterns" value="Expressed in apex of heart and 118 other cell types or tissues"/>
</dbReference>
<dbReference type="ExpressionAtlas" id="Q9HBU9">
    <property type="expression patterns" value="baseline and differential"/>
</dbReference>
<dbReference type="GO" id="GO:0016020">
    <property type="term" value="C:membrane"/>
    <property type="evidence" value="ECO:0000303"/>
    <property type="project" value="UniProtKB"/>
</dbReference>
<dbReference type="GO" id="GO:0042383">
    <property type="term" value="C:sarcolemma"/>
    <property type="evidence" value="ECO:0000314"/>
    <property type="project" value="UniProtKB"/>
</dbReference>
<dbReference type="GO" id="GO:0030552">
    <property type="term" value="F:cAMP binding"/>
    <property type="evidence" value="ECO:0000318"/>
    <property type="project" value="GO_Central"/>
</dbReference>
<dbReference type="GO" id="GO:0007507">
    <property type="term" value="P:heart development"/>
    <property type="evidence" value="ECO:0000318"/>
    <property type="project" value="GO_Central"/>
</dbReference>
<dbReference type="GO" id="GO:0002027">
    <property type="term" value="P:regulation of heart rate"/>
    <property type="evidence" value="ECO:0000250"/>
    <property type="project" value="UniProtKB"/>
</dbReference>
<dbReference type="GO" id="GO:0042391">
    <property type="term" value="P:regulation of membrane potential"/>
    <property type="evidence" value="ECO:0000318"/>
    <property type="project" value="GO_Central"/>
</dbReference>
<dbReference type="GO" id="GO:0007519">
    <property type="term" value="P:skeletal muscle tissue development"/>
    <property type="evidence" value="ECO:0000318"/>
    <property type="project" value="GO_Central"/>
</dbReference>
<dbReference type="GO" id="GO:0051146">
    <property type="term" value="P:striated muscle cell differentiation"/>
    <property type="evidence" value="ECO:0000318"/>
    <property type="project" value="GO_Central"/>
</dbReference>
<dbReference type="InterPro" id="IPR018490">
    <property type="entry name" value="cNMP-bd_dom_sf"/>
</dbReference>
<dbReference type="InterPro" id="IPR006916">
    <property type="entry name" value="POPDC1-3"/>
</dbReference>
<dbReference type="InterPro" id="IPR055272">
    <property type="entry name" value="POPDC1-3_dom"/>
</dbReference>
<dbReference type="PANTHER" id="PTHR12101">
    <property type="entry name" value="POPEYE DOMAIN CONTAINING PROTEIN"/>
    <property type="match status" value="1"/>
</dbReference>
<dbReference type="PANTHER" id="PTHR12101:SF15">
    <property type="entry name" value="POPEYE DOMAIN-CONTAINING PROTEIN 2"/>
    <property type="match status" value="1"/>
</dbReference>
<dbReference type="Pfam" id="PF04831">
    <property type="entry name" value="POPDC1-3"/>
    <property type="match status" value="1"/>
</dbReference>
<dbReference type="SUPFAM" id="SSF51206">
    <property type="entry name" value="cAMP-binding domain-like"/>
    <property type="match status" value="1"/>
</dbReference>
<keyword id="KW-0025">Alternative splicing</keyword>
<keyword id="KW-1003">Cell membrane</keyword>
<keyword id="KW-0325">Glycoprotein</keyword>
<keyword id="KW-0472">Membrane</keyword>
<keyword id="KW-0597">Phosphoprotein</keyword>
<keyword id="KW-1267">Proteomics identification</keyword>
<keyword id="KW-1185">Reference proteome</keyword>
<keyword id="KW-0812">Transmembrane</keyword>
<keyword id="KW-1133">Transmembrane helix</keyword>
<accession>Q9HBU9</accession>
<accession>Q86UE7</accession>
<sequence>MSANSSRVGQLLLQGSACIRWKQDVEGAVYHLANCLLLLGFMGGSGVYGCFYLFGFLSAGYLCCVLWGWFSACGLDIVLWSFLLAVVCLLQLAHLVYRLREDTLPEEFDLLYKTLCLPLQVPLQTYKEIVHCCEEQVLTLATEQTYAVEGETPINRLSLLLSGRVRVSQDGQFLHYIFPYQFMDSPEWESLQPSEEGVFQVTLTAETSCSYISWPRKSLHLLLTKERYISCLFSALLGYDISEKLYTLNDKLFAKFGLRFDIRLPSLYHVLGPTAADAGPESEKGDEEVCEPAVSPPQATPTSLQQTPPCSTPPATTNFPAPPTRARLSRPDSGILASRIPLQSYSQVISRGQAPLAPTHTPEL</sequence>
<reference key="1">
    <citation type="journal article" date="2000" name="Dev. Biol.">
        <title>Isolation and characterization of the novel popeye gene family expressed in skeletal muscle and heart.</title>
        <authorList>
            <person name="Andree B."/>
            <person name="Hillemann T."/>
            <person name="Kessler-Icekson G."/>
            <person name="Schmitt-John T."/>
            <person name="Jockusch H."/>
            <person name="Arnold H.-H."/>
            <person name="Brand T."/>
        </authorList>
    </citation>
    <scope>NUCLEOTIDE SEQUENCE [MRNA] (ISOFORM 1)</scope>
    <scope>POSSIBLE FUNCTION</scope>
    <scope>TISSUE SPECIFICITY</scope>
</reference>
<reference key="2">
    <citation type="journal article" date="2004" name="Genome Res.">
        <title>The status, quality, and expansion of the NIH full-length cDNA project: the Mammalian Gene Collection (MGC).</title>
        <authorList>
            <consortium name="The MGC Project Team"/>
        </authorList>
    </citation>
    <scope>NUCLEOTIDE SEQUENCE [LARGE SCALE MRNA] (ISOFORMS 1 AND 2)</scope>
    <source>
        <tissue>Colon</tissue>
        <tissue>Kidney</tissue>
        <tissue>Stomach</tissue>
        <tissue>Urinary bladder</tissue>
    </source>
</reference>
<reference key="3">
    <citation type="journal article" date="2016" name="J. Clin. Invest.">
        <title>POPDC1S201F causes muscular dystrophy and arrhythmia by affecting protein trafficking.</title>
        <authorList>
            <person name="Schindler R.F."/>
            <person name="Scotton C."/>
            <person name="Zhang J."/>
            <person name="Passarelli C."/>
            <person name="Ortiz-Bonnin B."/>
            <person name="Simrick S."/>
            <person name="Schwerte T."/>
            <person name="Poon K.L."/>
            <person name="Fang M."/>
            <person name="Rinne S."/>
            <person name="Froese A."/>
            <person name="Nikolaev V.O."/>
            <person name="Grunert C."/>
            <person name="Mueller T."/>
            <person name="Tasca G."/>
            <person name="Sarathchandra P."/>
            <person name="Drago F."/>
            <person name="Dallapiccola B."/>
            <person name="Rapezzi C."/>
            <person name="Arbustini E."/>
            <person name="Di Raimo F.R."/>
            <person name="Neri M."/>
            <person name="Selvatici R."/>
            <person name="Gualandi F."/>
            <person name="Fattori F."/>
            <person name="Pietrangelo A."/>
            <person name="Li W."/>
            <person name="Jiang H."/>
            <person name="Xu X."/>
            <person name="Bertini E."/>
            <person name="Decher N."/>
            <person name="Wang J."/>
            <person name="Brand T."/>
            <person name="Ferlini A."/>
        </authorList>
    </citation>
    <scope>SUBCELLULAR LOCATION</scope>
    <scope>TISSUE SPECIFICITY</scope>
</reference>
<gene>
    <name type="primary">POPDC2</name>
    <name type="synonym">POP2</name>
</gene>